<sequence>MVAMPTAWCSIALALLLALHEGKGQVAAAPDQPAPSHRARASHLRPRRCSCSSWLDKECVYFCHLDIIWVNTPGQTAPYGLGNPPRRRRRSLPKRCECSSGRDPACATFCHRRPKPEAVVVPGSGPPPDVFQAGRARPSAGELLQQLRDISAAKSHFARRQQVAVRELRPTHSRRWKR</sequence>
<reference key="1">
    <citation type="submission" date="2004-12" db="EMBL/GenBank/DDBJ databases">
        <title>Cloning of cat preproendothelin-2 cDNA.</title>
        <authorList>
            <person name="Uchide T."/>
        </authorList>
    </citation>
    <scope>NUCLEOTIDE SEQUENCE [MRNA]</scope>
</reference>
<evidence type="ECO:0000250" key="1"/>
<evidence type="ECO:0000255" key="2"/>
<evidence type="ECO:0000305" key="3"/>
<accession>Q5NRQ0</accession>
<organism>
    <name type="scientific">Felis catus</name>
    <name type="common">Cat</name>
    <name type="synonym">Felis silvestris catus</name>
    <dbReference type="NCBI Taxonomy" id="9685"/>
    <lineage>
        <taxon>Eukaryota</taxon>
        <taxon>Metazoa</taxon>
        <taxon>Chordata</taxon>
        <taxon>Craniata</taxon>
        <taxon>Vertebrata</taxon>
        <taxon>Euteleostomi</taxon>
        <taxon>Mammalia</taxon>
        <taxon>Eutheria</taxon>
        <taxon>Laurasiatheria</taxon>
        <taxon>Carnivora</taxon>
        <taxon>Feliformia</taxon>
        <taxon>Felidae</taxon>
        <taxon>Felinae</taxon>
        <taxon>Felis</taxon>
    </lineage>
</organism>
<proteinExistence type="evidence at transcript level"/>
<protein>
    <recommendedName>
        <fullName>Endothelin-2</fullName>
        <shortName>ET-2</shortName>
    </recommendedName>
    <alternativeName>
        <fullName>Preproendothelin-2</fullName>
        <shortName>PPET2</shortName>
    </alternativeName>
</protein>
<keyword id="KW-0165">Cleavage on pair of basic residues</keyword>
<keyword id="KW-1015">Disulfide bond</keyword>
<keyword id="KW-1185">Reference proteome</keyword>
<keyword id="KW-0964">Secreted</keyword>
<keyword id="KW-0732">Signal</keyword>
<keyword id="KW-0838">Vasoactive</keyword>
<keyword id="KW-0839">Vasoconstrictor</keyword>
<feature type="signal peptide" evidence="2">
    <location>
        <begin position="1"/>
        <end position="26"/>
    </location>
</feature>
<feature type="propeptide" id="PRO_0000008090" evidence="1">
    <location>
        <begin position="27"/>
        <end position="46"/>
    </location>
</feature>
<feature type="peptide" id="PRO_0000008091" description="Endothelin-2">
    <location>
        <begin position="49"/>
        <end position="69"/>
    </location>
</feature>
<feature type="propeptide" id="PRO_0000008092" evidence="1">
    <location>
        <begin position="70"/>
        <end position="178"/>
    </location>
</feature>
<feature type="region of interest" description="Endothelin-like">
    <location>
        <begin position="96"/>
        <end position="111"/>
    </location>
</feature>
<feature type="site" description="Cleavage; by KEL" evidence="1">
    <location>
        <begin position="69"/>
        <end position="70"/>
    </location>
</feature>
<feature type="disulfide bond" evidence="1">
    <location>
        <begin position="49"/>
        <end position="63"/>
    </location>
</feature>
<feature type="disulfide bond" evidence="1">
    <location>
        <begin position="51"/>
        <end position="59"/>
    </location>
</feature>
<dbReference type="EMBL" id="AB197699">
    <property type="protein sequence ID" value="BAD83371.1"/>
    <property type="molecule type" value="mRNA"/>
</dbReference>
<dbReference type="RefSeq" id="NP_001009387.1">
    <property type="nucleotide sequence ID" value="NM_001009387.1"/>
</dbReference>
<dbReference type="FunCoup" id="Q5NRQ0">
    <property type="interactions" value="1"/>
</dbReference>
<dbReference type="STRING" id="9685.ENSFCAP00000013015"/>
<dbReference type="PaxDb" id="9685-ENSFCAP00000013015"/>
<dbReference type="GeneID" id="494215"/>
<dbReference type="KEGG" id="fca:494215"/>
<dbReference type="CTD" id="1907"/>
<dbReference type="eggNOG" id="ENOG502S5KM">
    <property type="taxonomic scope" value="Eukaryota"/>
</dbReference>
<dbReference type="HOGENOM" id="CLU_090013_2_1_1"/>
<dbReference type="InParanoid" id="Q5NRQ0"/>
<dbReference type="OrthoDB" id="9362154at2759"/>
<dbReference type="TreeFam" id="TF333184"/>
<dbReference type="Proteomes" id="UP000011712">
    <property type="component" value="Unplaced"/>
</dbReference>
<dbReference type="GO" id="GO:0005615">
    <property type="term" value="C:extracellular space"/>
    <property type="evidence" value="ECO:0000318"/>
    <property type="project" value="GO_Central"/>
</dbReference>
<dbReference type="GO" id="GO:0031708">
    <property type="term" value="F:endothelin B receptor binding"/>
    <property type="evidence" value="ECO:0000318"/>
    <property type="project" value="GO_Central"/>
</dbReference>
<dbReference type="GO" id="GO:0005179">
    <property type="term" value="F:hormone activity"/>
    <property type="evidence" value="ECO:0000318"/>
    <property type="project" value="GO_Central"/>
</dbReference>
<dbReference type="GO" id="GO:0006874">
    <property type="term" value="P:intracellular calcium ion homeostasis"/>
    <property type="evidence" value="ECO:0000318"/>
    <property type="project" value="GO_Central"/>
</dbReference>
<dbReference type="GO" id="GO:0045987">
    <property type="term" value="P:positive regulation of smooth muscle contraction"/>
    <property type="evidence" value="ECO:0000318"/>
    <property type="project" value="GO_Central"/>
</dbReference>
<dbReference type="GO" id="GO:0003100">
    <property type="term" value="P:regulation of systemic arterial blood pressure by endothelin"/>
    <property type="evidence" value="ECO:0000318"/>
    <property type="project" value="GO_Central"/>
</dbReference>
<dbReference type="GO" id="GO:0019229">
    <property type="term" value="P:regulation of vasoconstriction"/>
    <property type="evidence" value="ECO:0007669"/>
    <property type="project" value="InterPro"/>
</dbReference>
<dbReference type="GO" id="GO:0014826">
    <property type="term" value="P:vein smooth muscle contraction"/>
    <property type="evidence" value="ECO:0000318"/>
    <property type="project" value="GO_Central"/>
</dbReference>
<dbReference type="InterPro" id="IPR020475">
    <property type="entry name" value="Endothelin"/>
</dbReference>
<dbReference type="InterPro" id="IPR019764">
    <property type="entry name" value="Endothelin_toxin_CS"/>
</dbReference>
<dbReference type="InterPro" id="IPR001928">
    <property type="entry name" value="Endothln-like_toxin"/>
</dbReference>
<dbReference type="PANTHER" id="PTHR13874">
    <property type="entry name" value="ENDOTHELIN"/>
    <property type="match status" value="1"/>
</dbReference>
<dbReference type="PANTHER" id="PTHR13874:SF9">
    <property type="entry name" value="ENDOTHELIN-2"/>
    <property type="match status" value="1"/>
</dbReference>
<dbReference type="Pfam" id="PF00322">
    <property type="entry name" value="Endothelin"/>
    <property type="match status" value="1"/>
</dbReference>
<dbReference type="PRINTS" id="PR00365">
    <property type="entry name" value="ENDOTHELIN"/>
</dbReference>
<dbReference type="SMART" id="SM00272">
    <property type="entry name" value="END"/>
    <property type="match status" value="2"/>
</dbReference>
<dbReference type="PROSITE" id="PS00270">
    <property type="entry name" value="ENDOTHELIN"/>
    <property type="match status" value="2"/>
</dbReference>
<comment type="function">
    <text evidence="1">Endothelins are endothelium-derived vasoconstrictor peptides.</text>
</comment>
<comment type="subcellular location">
    <subcellularLocation>
        <location evidence="1">Secreted</location>
    </subcellularLocation>
</comment>
<comment type="similarity">
    <text evidence="3">Belongs to the endothelin/sarafotoxin family.</text>
</comment>
<gene>
    <name type="primary">EDN2</name>
</gene>
<name>EDN2_FELCA</name>